<gene>
    <name type="primary">GGN6</name>
</gene>
<accession>P80400</accession>
<feature type="peptide" id="PRO_0000043554" description="Gaegurin-6">
    <location>
        <begin position="1"/>
        <end position="24"/>
    </location>
</feature>
<feature type="disulfide bond" evidence="1">
    <location>
        <begin position="18"/>
        <end position="24"/>
    </location>
</feature>
<keyword id="KW-0878">Amphibian defense peptide</keyword>
<keyword id="KW-0044">Antibiotic</keyword>
<keyword id="KW-0929">Antimicrobial</keyword>
<keyword id="KW-0903">Direct protein sequencing</keyword>
<keyword id="KW-1015">Disulfide bond</keyword>
<keyword id="KW-0964">Secreted</keyword>
<name>GGN6_GLARU</name>
<comment type="function">
    <text>Has a non-hemolytic activity. Has a broad spectrum of activity against both Gram-positive and Gram-negative bacteria, fungi and protozoa.</text>
</comment>
<comment type="subunit">
    <text>Monomer.</text>
</comment>
<comment type="subcellular location">
    <subcellularLocation>
        <location>Secreted</location>
    </subcellularLocation>
</comment>
<comment type="tissue specificity">
    <text>Expressed by the skin glands.</text>
</comment>
<comment type="similarity">
    <text evidence="2">Belongs to the frog skin active peptide (FSAP) family. Brevinin subfamily.</text>
</comment>
<dbReference type="PIR" id="PC2305">
    <property type="entry name" value="PC2305"/>
</dbReference>
<dbReference type="GO" id="GO:0005576">
    <property type="term" value="C:extracellular region"/>
    <property type="evidence" value="ECO:0007669"/>
    <property type="project" value="UniProtKB-SubCell"/>
</dbReference>
<dbReference type="GO" id="GO:0042742">
    <property type="term" value="P:defense response to bacterium"/>
    <property type="evidence" value="ECO:0007669"/>
    <property type="project" value="UniProtKB-KW"/>
</dbReference>
<dbReference type="InterPro" id="IPR012520">
    <property type="entry name" value="Antimicrobial_frog_1"/>
</dbReference>
<dbReference type="Pfam" id="PF08018">
    <property type="entry name" value="Antimicrobial_1"/>
    <property type="match status" value="1"/>
</dbReference>
<proteinExistence type="evidence at protein level"/>
<organism>
    <name type="scientific">Glandirana rugosa</name>
    <name type="common">Japanese wrinkled frog</name>
    <name type="synonym">Rana rugosa</name>
    <dbReference type="NCBI Taxonomy" id="8410"/>
    <lineage>
        <taxon>Eukaryota</taxon>
        <taxon>Metazoa</taxon>
        <taxon>Chordata</taxon>
        <taxon>Craniata</taxon>
        <taxon>Vertebrata</taxon>
        <taxon>Euteleostomi</taxon>
        <taxon>Amphibia</taxon>
        <taxon>Batrachia</taxon>
        <taxon>Anura</taxon>
        <taxon>Neobatrachia</taxon>
        <taxon>Ranoidea</taxon>
        <taxon>Ranidae</taxon>
        <taxon>Glandirana</taxon>
    </lineage>
</organism>
<sequence>FLPLLAGLAANFLPTIICKISYKC</sequence>
<protein>
    <recommendedName>
        <fullName>Gaegurin-6</fullName>
    </recommendedName>
</protein>
<evidence type="ECO:0000250" key="1"/>
<evidence type="ECO:0000305" key="2"/>
<reference key="1">
    <citation type="journal article" date="1994" name="Biochem. Biophys. Res. Commun.">
        <title>Antimicrobial peptides from the skin of a Korean frog, Rana rugosa.</title>
        <authorList>
            <person name="Park J.M."/>
            <person name="Jung J.-E."/>
            <person name="Lee B.J."/>
        </authorList>
    </citation>
    <scope>PROTEIN SEQUENCE</scope>
    <source>
        <tissue>Skin secretion</tissue>
    </source>
</reference>